<proteinExistence type="evidence at protein level"/>
<protein>
    <recommendedName>
        <fullName evidence="20">DNA-binding protein HupB</fullName>
        <shortName evidence="17">HupB</shortName>
        <ecNumber evidence="7">1.16.3.1</ecNumber>
    </recommendedName>
    <alternativeName>
        <fullName evidence="15">Cold induced protein</fullName>
        <shortName evidence="15">CipMa</shortName>
    </alternativeName>
    <alternativeName>
        <fullName evidence="19">DNA-binding protein HU</fullName>
    </alternativeName>
    <alternativeName>
        <fullName evidence="18">Histone-like protein</fullName>
        <shortName evidence="18">Hlp</shortName>
    </alternativeName>
    <alternativeName>
        <fullName evidence="16">Mycobacterial DNA-binding protein 1</fullName>
        <shortName evidence="16">MDP1</shortName>
    </alternativeName>
</protein>
<keyword id="KW-0007">Acetylation</keyword>
<keyword id="KW-0134">Cell wall</keyword>
<keyword id="KW-0963">Cytoplasm</keyword>
<keyword id="KW-0903">Direct protein sequencing</keyword>
<keyword id="KW-0226">DNA condensation</keyword>
<keyword id="KW-0235">DNA replication</keyword>
<keyword id="KW-0238">DNA-binding</keyword>
<keyword id="KW-0408">Iron</keyword>
<keyword id="KW-0409">Iron storage</keyword>
<keyword id="KW-0488">Methylation</keyword>
<keyword id="KW-0560">Oxidoreductase</keyword>
<keyword id="KW-1185">Reference proteome</keyword>
<keyword id="KW-0964">Secreted</keyword>
<keyword id="KW-0804">Transcription</keyword>
<keyword id="KW-0805">Transcription regulation</keyword>
<comment type="function">
    <text evidence="6 8 9 10 12 13">A nucleoid-associated protein (NAP) that plays a crucial role in local chromosome architecture (PubMed:24916461, PubMed:36960278). Helps organize newly replicated oriC proximal regions and contributes to the timing of replication initiation and coordinating replication with chromosome segregation (PubMed:29114022, PubMed:29531181, PubMed:36960278). There are between 30,000-60,000 molecules in a log phase cell; the protein-DNA complex is dynamic during the cell cycle, with more complexes near the cell ends. Binds irregularly along the chromosome with higher binding near the origin of replication (oriC) and lowest binding near the chromosome terminus (ter) (PubMed:29114022). Binds DNA non-sequence specifically via both its N- and C-terminal domains with high affinity, has no preference for linear or supercoiled DNA. Binds four-way junction DNA. Represses T7 RNA polymerase in vitro. The C-terminal domain enhances DNA end-joining in vitro in the presence of T4 DNA ligase (PubMed:18656956). RNase E and HupB jointly contribute to cellular adaptation to changing growth conditions and survival during antibiotic treatment (PubMed:35521527).</text>
</comment>
<comment type="function">
    <text evidence="2 7 22">Has ferroxidase activity, converts Fe(2+) into Fe(3+) (PubMed:21698192). Binds Fe(3+) but not Fe(2+); prevents the generation of hydroxyl radicals by the Fenton reaction and thus protects DNA from damage (Probable) (PubMed:21698192). May function in iron storage (By similarity).</text>
</comment>
<comment type="function">
    <text evidence="11">Plays a role in epigenetic resistance to antibiotics. Growth on levels of isoniazid (INH) near the minimal inhibitory concentration (MIC) kills most bacteria. The surviving cells grow as either large or small colony variants (SCV), evidence suggest SCVs are associated with persistent infections. Mutating this protein leads to specific loss of SCVs.</text>
</comment>
<comment type="function">
    <text evidence="21">May play a role in cell wall assembly (PubMed:17873049).</text>
</comment>
<comment type="catalytic activity">
    <reaction evidence="7">
        <text>4 Fe(2+) + O2 + 4 H(+) = 4 Fe(3+) + 2 H2O</text>
        <dbReference type="Rhea" id="RHEA:11148"/>
        <dbReference type="ChEBI" id="CHEBI:15377"/>
        <dbReference type="ChEBI" id="CHEBI:15378"/>
        <dbReference type="ChEBI" id="CHEBI:15379"/>
        <dbReference type="ChEBI" id="CHEBI:29033"/>
        <dbReference type="ChEBI" id="CHEBI:29034"/>
        <dbReference type="EC" id="1.16.3.1"/>
    </reaction>
    <physiologicalReaction direction="left-to-right" evidence="7">
        <dbReference type="Rhea" id="RHEA:11149"/>
    </physiologicalReaction>
</comment>
<comment type="activity regulation">
    <text evidence="8">Trans-stilbene derivative 4,4'-[(E)-ethene-1,2 diylbis({5[(phenylcarbonyl)amino]benzene-2,1-diyl}sulfonylimino)] dibenzoic acid (SD1) inhibits DNA binding at 50 uM. SD1 does not inhibit growth in a range of 3-1600 uM.</text>
</comment>
<comment type="biophysicochemical properties">
    <kinetics>
        <KM evidence="7">0.136 mM for Fe(2+)</KM>
    </kinetics>
</comment>
<comment type="subunit">
    <text evidence="23 24">May form oligomers (Probable) (PubMed:29114022). Interacts with RNase E (rne) (Probable) (PubMed:35521527).</text>
</comment>
<comment type="subcellular location">
    <subcellularLocation>
        <location evidence="9 10 12 13 21">Cytoplasm</location>
        <location evidence="9 10 12 13 21">Nucleoid</location>
    </subcellularLocation>
    <subcellularLocation>
        <location evidence="21">Secreted</location>
        <location evidence="21">Cell wall</location>
    </subcellularLocation>
    <text evidence="5 9 12 13">Found along the cell length in a stable, bead-like pattern corresponding to DNA (nucleoid) distribution (PubMed:29114022, PubMed:35521527, PubMed:36960278). Colocalizes with RNase E (rne) (PubMed:35521527). Colocalizes with mIHF (PubMed:36960278). Associated with the cell wall over all growth phases (PubMed:17873049).</text>
</comment>
<comment type="induction">
    <text evidence="4 13 14">Expressed at high levels after a shift to 10 degrees Celsius; visible after 2-3 hours rises until it reaches 20-25% of cellular protein (at protein level) (PubMed:11251819). Induced in 10-day old anaerobic dormant culture (at protein level) (PubMed:9894918). Transcribed at high levels in logarithmic growth, decreases in stationary phase (PubMed:36960278).</text>
</comment>
<comment type="domain">
    <text evidence="6 9 10">Both the N-terminus (residues 1-97) and the C-terminus (residues 119-208) bind dsDNA (PubMed:18656956). Deletion of the C-terminus (residues 92-208) has no phenotype in rich medium but leads to 90% decreased growth on isoniazid; protein no longer associates with the nucleoid, instead is free in the cytoplasm (PubMed:29114022). The C-terminal deletion strain binds DNA in a non-discrete fashion (PubMed:29114022). The C-terminal deletion strain has a delay in replication initiation (PubMed:29531181).</text>
</comment>
<comment type="PTM">
    <text evidence="11">In addition to the identifed modifications, is also methylated on one of Arg-53; Arg-54 or Arg-55.</text>
</comment>
<comment type="disruption phenotype">
    <text evidence="4 5 7 9 10 11 13 14">No visible growth phenotype in logarithmic or stationary phase (PubMed:29114022, PubMed:9894918). Bacterial density in stationary phase is decreased, cell surface is altered, increased accumulation of trehalose-6-monomycolate (TMM) and alpha- and alpha'-mycolic acid methyl esters in stationary phase (growth in LB) (PubMed:17873049). No visible change in nucleoid organization (PubMed:29114022). Loss of phenotypically drug-resistant cells on isoniazid (INH); up-regulation of 77 genes (PubMed:29114022, PubMed:29732401). Does not grow at 10 degrees Celsius (PubMed:11251819). 100-fold decreased resistance to 12.5 mM H(2)O(2); the major bactericidal effect of H(2)O(2) depends on iron (PubMed:21698192). Delayed initation of DNA replication, slightly slower growth (PubMed:29531181, PubMed:36960278). Delayed initation of daughter chromosome separation, chromosome structure is more diffuse, increased sensitivity to blue light (PubMed:36960278).</text>
</comment>
<comment type="similarity">
    <text evidence="20">Belongs to the bacterial histone-like protein family. Long actinobacterial subfamily.</text>
</comment>
<dbReference type="EC" id="1.16.3.1" evidence="7"/>
<dbReference type="EMBL" id="AF068138">
    <property type="protein sequence ID" value="AAD13809.1"/>
    <property type="molecule type" value="Genomic_DNA"/>
</dbReference>
<dbReference type="EMBL" id="CP000480">
    <property type="protein sequence ID" value="ABK73522.1"/>
    <property type="molecule type" value="Genomic_DNA"/>
</dbReference>
<dbReference type="EMBL" id="CP001663">
    <property type="protein sequence ID" value="AFP38797.1"/>
    <property type="molecule type" value="Genomic_DNA"/>
</dbReference>
<dbReference type="RefSeq" id="WP_003893755.1">
    <property type="nucleotide sequence ID" value="NZ_CP009494.1"/>
</dbReference>
<dbReference type="RefSeq" id="YP_886729.1">
    <property type="nucleotide sequence ID" value="NC_008596.1"/>
</dbReference>
<dbReference type="SMR" id="Q9ZHC5"/>
<dbReference type="STRING" id="246196.MSMEG_2389"/>
<dbReference type="iPTMnet" id="Q9ZHC5"/>
<dbReference type="PaxDb" id="246196-MSMEI_2329"/>
<dbReference type="KEGG" id="msb:LJ00_11880"/>
<dbReference type="KEGG" id="msg:MSMEI_2329"/>
<dbReference type="KEGG" id="msm:MSMEG_2389"/>
<dbReference type="PATRIC" id="fig|246196.56.peg.2386"/>
<dbReference type="eggNOG" id="COG0776">
    <property type="taxonomic scope" value="Bacteria"/>
</dbReference>
<dbReference type="OrthoDB" id="9799835at2"/>
<dbReference type="Proteomes" id="UP000000757">
    <property type="component" value="Chromosome"/>
</dbReference>
<dbReference type="Proteomes" id="UP000006158">
    <property type="component" value="Chromosome"/>
</dbReference>
<dbReference type="GO" id="GO:0005829">
    <property type="term" value="C:cytosol"/>
    <property type="evidence" value="ECO:0007669"/>
    <property type="project" value="TreeGrafter"/>
</dbReference>
<dbReference type="GO" id="GO:0005576">
    <property type="term" value="C:extracellular region"/>
    <property type="evidence" value="ECO:0007669"/>
    <property type="project" value="UniProtKB-KW"/>
</dbReference>
<dbReference type="GO" id="GO:0009295">
    <property type="term" value="C:nucleoid"/>
    <property type="evidence" value="ECO:0007669"/>
    <property type="project" value="UniProtKB-SubCell"/>
</dbReference>
<dbReference type="GO" id="GO:0003677">
    <property type="term" value="F:DNA binding"/>
    <property type="evidence" value="ECO:0007669"/>
    <property type="project" value="UniProtKB-KW"/>
</dbReference>
<dbReference type="GO" id="GO:0004322">
    <property type="term" value="F:ferroxidase activity"/>
    <property type="evidence" value="ECO:0000314"/>
    <property type="project" value="UniProtKB"/>
</dbReference>
<dbReference type="GO" id="GO:0030527">
    <property type="term" value="F:structural constituent of chromatin"/>
    <property type="evidence" value="ECO:0007669"/>
    <property type="project" value="InterPro"/>
</dbReference>
<dbReference type="GO" id="GO:0030261">
    <property type="term" value="P:chromosome condensation"/>
    <property type="evidence" value="ECO:0007669"/>
    <property type="project" value="UniProtKB-KW"/>
</dbReference>
<dbReference type="GO" id="GO:0006260">
    <property type="term" value="P:DNA replication"/>
    <property type="evidence" value="ECO:0007669"/>
    <property type="project" value="UniProtKB-KW"/>
</dbReference>
<dbReference type="GO" id="GO:0006879">
    <property type="term" value="P:intracellular iron ion homeostasis"/>
    <property type="evidence" value="ECO:0007669"/>
    <property type="project" value="UniProtKB-KW"/>
</dbReference>
<dbReference type="CDD" id="cd13831">
    <property type="entry name" value="HU"/>
    <property type="match status" value="1"/>
</dbReference>
<dbReference type="FunFam" id="4.10.520.10:FF:000006">
    <property type="entry name" value="DNA-binding protein HU"/>
    <property type="match status" value="1"/>
</dbReference>
<dbReference type="Gene3D" id="4.10.520.10">
    <property type="entry name" value="IHF-like DNA-binding proteins"/>
    <property type="match status" value="1"/>
</dbReference>
<dbReference type="InterPro" id="IPR000119">
    <property type="entry name" value="Hist_DNA-bd"/>
</dbReference>
<dbReference type="InterPro" id="IPR020816">
    <property type="entry name" value="Histone-like_DNA-bd_CS"/>
</dbReference>
<dbReference type="InterPro" id="IPR010992">
    <property type="entry name" value="IHF-like_DNA-bd_dom_sf"/>
</dbReference>
<dbReference type="PANTHER" id="PTHR33175">
    <property type="entry name" value="DNA-BINDING PROTEIN HU"/>
    <property type="match status" value="1"/>
</dbReference>
<dbReference type="PANTHER" id="PTHR33175:SF3">
    <property type="entry name" value="DNA-BINDING PROTEIN HU-BETA"/>
    <property type="match status" value="1"/>
</dbReference>
<dbReference type="Pfam" id="PF00216">
    <property type="entry name" value="Bac_DNA_binding"/>
    <property type="match status" value="1"/>
</dbReference>
<dbReference type="PRINTS" id="PR01727">
    <property type="entry name" value="DNABINDINGHU"/>
</dbReference>
<dbReference type="SMART" id="SM00411">
    <property type="entry name" value="BHL"/>
    <property type="match status" value="1"/>
</dbReference>
<dbReference type="SUPFAM" id="SSF47729">
    <property type="entry name" value="IHF-like DNA-binding proteins"/>
    <property type="match status" value="1"/>
</dbReference>
<dbReference type="PROSITE" id="PS00045">
    <property type="entry name" value="HISTONE_LIKE"/>
    <property type="match status" value="1"/>
</dbReference>
<sequence>MNKAELIDVLTTKMGTDRRQATAAVENVVDTIVRAVHKGDSVTITGFGVFEQRRRAARVARNPRTGETVKVKPTSVPAFRPGAQFKAVISGAQKLPADGPAVKRGVTAGPAKKAAKKAPAKKAAAKKTATKAAAKKAPAKKAATKAPAKKAATKAPAKKAATKAPAKKAATKAPAKKAAAKAPAKKAATKAPAKKAAAKKAPAKKGRR</sequence>
<organism>
    <name type="scientific">Mycolicibacterium smegmatis (strain ATCC 700084 / mc(2)155)</name>
    <name type="common">Mycobacterium smegmatis</name>
    <dbReference type="NCBI Taxonomy" id="246196"/>
    <lineage>
        <taxon>Bacteria</taxon>
        <taxon>Bacillati</taxon>
        <taxon>Actinomycetota</taxon>
        <taxon>Actinomycetes</taxon>
        <taxon>Mycobacteriales</taxon>
        <taxon>Mycobacteriaceae</taxon>
        <taxon>Mycolicibacterium</taxon>
    </lineage>
</organism>
<name>DBH_MYCS2</name>
<gene>
    <name evidence="19" type="primary">hup</name>
    <name evidence="15" type="synonym">cipMa</name>
    <name evidence="18" type="synonym">hlp</name>
    <name type="ordered locus">MSMEG_2389</name>
    <name type="ordered locus">MSMEI_2329</name>
</gene>
<evidence type="ECO:0000250" key="1">
    <source>
        <dbReference type="UniProtKB" id="A5U6Z7"/>
    </source>
</evidence>
<evidence type="ECO:0000250" key="2">
    <source>
        <dbReference type="UniProtKB" id="Q9XB18"/>
    </source>
</evidence>
<evidence type="ECO:0000256" key="3">
    <source>
        <dbReference type="SAM" id="MobiDB-lite"/>
    </source>
</evidence>
<evidence type="ECO:0000269" key="4">
    <source>
    </source>
</evidence>
<evidence type="ECO:0000269" key="5">
    <source>
    </source>
</evidence>
<evidence type="ECO:0000269" key="6">
    <source>
    </source>
</evidence>
<evidence type="ECO:0000269" key="7">
    <source>
    </source>
</evidence>
<evidence type="ECO:0000269" key="8">
    <source>
    </source>
</evidence>
<evidence type="ECO:0000269" key="9">
    <source>
    </source>
</evidence>
<evidence type="ECO:0000269" key="10">
    <source>
    </source>
</evidence>
<evidence type="ECO:0000269" key="11">
    <source>
    </source>
</evidence>
<evidence type="ECO:0000269" key="12">
    <source>
    </source>
</evidence>
<evidence type="ECO:0000269" key="13">
    <source>
    </source>
</evidence>
<evidence type="ECO:0000269" key="14">
    <source>
    </source>
</evidence>
<evidence type="ECO:0000303" key="15">
    <source>
    </source>
</evidence>
<evidence type="ECO:0000303" key="16">
    <source>
    </source>
</evidence>
<evidence type="ECO:0000303" key="17">
    <source>
    </source>
</evidence>
<evidence type="ECO:0000303" key="18">
    <source>
    </source>
</evidence>
<evidence type="ECO:0000303" key="19">
    <source ref="2"/>
</evidence>
<evidence type="ECO:0000305" key="20"/>
<evidence type="ECO:0000305" key="21">
    <source>
    </source>
</evidence>
<evidence type="ECO:0000305" key="22">
    <source>
    </source>
</evidence>
<evidence type="ECO:0000305" key="23">
    <source>
    </source>
</evidence>
<evidence type="ECO:0000305" key="24">
    <source>
    </source>
</evidence>
<evidence type="ECO:0000312" key="25">
    <source>
        <dbReference type="EMBL" id="AAD13809.1"/>
    </source>
</evidence>
<evidence type="ECO:0000312" key="26">
    <source>
        <dbReference type="EMBL" id="ABK73522.1"/>
    </source>
</evidence>
<evidence type="ECO:0000312" key="27">
    <source>
        <dbReference type="EMBL" id="AFP38797.1"/>
    </source>
</evidence>
<feature type="chain" id="PRO_0000104949" description="DNA-binding protein HupB">
    <location>
        <begin position="1"/>
        <end position="208"/>
    </location>
</feature>
<feature type="region of interest" description="Bacterial histone-like domain">
    <location>
        <begin position="1"/>
        <end position="90"/>
    </location>
</feature>
<feature type="region of interest" description="C-terminus, required for nucleoid localization" evidence="9">
    <location>
        <begin position="92"/>
        <end position="208"/>
    </location>
</feature>
<feature type="region of interest" description="Disordered" evidence="3">
    <location>
        <begin position="96"/>
        <end position="208"/>
    </location>
</feature>
<feature type="region of interest" description="Degenerate repeats region" evidence="14">
    <location>
        <begin position="101"/>
        <end position="205"/>
    </location>
</feature>
<feature type="compositionally biased region" description="Basic residues" evidence="3">
    <location>
        <begin position="113"/>
        <end position="208"/>
    </location>
</feature>
<feature type="modified residue" description="N6-acetyllysine" evidence="1">
    <location>
        <position position="3"/>
    </location>
</feature>
<feature type="modified residue" description="N6-acetyllysine; alternate; partial" evidence="11">
    <location>
        <position position="3"/>
    </location>
</feature>
<feature type="modified residue" description="N6-methyllysine; alternate; partial" evidence="11">
    <location>
        <position position="3"/>
    </location>
</feature>
<feature type="modified residue" description="N6-acetyllysine; partial" evidence="11">
    <location>
        <position position="72"/>
    </location>
</feature>
<feature type="modified residue" description="N6-methyllysine; partial" evidence="11">
    <location>
        <position position="86"/>
    </location>
</feature>
<feature type="modified residue" description="N6-acetyllysine; alternate; partial" evidence="11">
    <location>
        <position position="94"/>
    </location>
</feature>
<feature type="modified residue" description="N6-methyllysine; alternate; partial" evidence="11">
    <location>
        <position position="94"/>
    </location>
</feature>
<feature type="modified residue" description="N6-acetyllysine; alternate; partial" evidence="11">
    <location>
        <position position="103"/>
    </location>
</feature>
<feature type="modified residue" description="N6-methyllysine; alternate; partial" evidence="11">
    <location>
        <position position="103"/>
    </location>
</feature>
<feature type="modified residue" description="N6-acetyllysine" evidence="1">
    <location>
        <position position="116"/>
    </location>
</feature>
<feature type="modified residue" description="N6-acetyllysine" evidence="1">
    <location>
        <position position="136"/>
    </location>
</feature>
<feature type="modified residue" description="N6-acetyllysine" evidence="1">
    <location>
        <position position="149"/>
    </location>
</feature>
<feature type="modified residue" description="N6-acetyllysine" evidence="1">
    <location>
        <position position="168"/>
    </location>
</feature>
<feature type="sequence variant" description="In strain: LR222." evidence="4">
    <original>T</original>
    <variation>K</variation>
    <location>
        <position position="12"/>
    </location>
</feature>
<feature type="sequence variant" description="In strain: LR222." evidence="4">
    <original>G</original>
    <variation>N</variation>
    <location>
        <position position="15"/>
    </location>
</feature>
<feature type="mutagenesis site" description="Significantly reduces protein level in vivo." evidence="11">
    <original>K</original>
    <variation>R</variation>
    <variation>Q</variation>
    <location>
        <position position="3"/>
    </location>
</feature>
<feature type="mutagenesis site" description="Significantly reduces protein level in vivo." evidence="11">
    <original>R</original>
    <variation>A</variation>
    <location>
        <position position="55"/>
    </location>
</feature>
<feature type="mutagenesis site" description="No protein in vivo." evidence="11">
    <original>K</original>
    <variation>R</variation>
    <location>
        <position position="72"/>
    </location>
</feature>
<feature type="mutagenesis site" description="Wild-type growth, no overt gene expression changes, 20% survival on INH, reduced ability to form SCV on INH." evidence="11">
    <original>K</original>
    <variation>R</variation>
    <location>
        <position position="86"/>
    </location>
</feature>
<feature type="mutagenesis site" description="No protein in vivo." evidence="11">
    <original>K</original>
    <variation>R</variation>
    <location>
        <position position="94"/>
    </location>
</feature>
<accession>Q9ZHC5</accession>
<accession>A0QUZ1</accession>
<accession>I7FZW7</accession>
<reference evidence="25" key="1">
    <citation type="journal article" date="1998" name="Mol. Gen. Genet.">
        <title>Upregulation of a histone-like protein in dormant Mycobacterium smegmatis.</title>
        <authorList>
            <person name="Lee B.H."/>
            <person name="Murugasu-Oei B."/>
            <person name="Dick T."/>
        </authorList>
    </citation>
    <scope>NUCLEOTIDE SEQUENCE [GENOMIC DNA]</scope>
    <scope>PROTEIN SEQUENCE OF 39-50</scope>
    <scope>INDUCTION</scope>
    <scope>REPEATS</scope>
    <scope>DISRUPTION PHENOTYPE</scope>
    <source>
        <strain>ATCC 700084 / mc(2)155</strain>
    </source>
</reference>
<reference evidence="26" key="2">
    <citation type="submission" date="2006-10" db="EMBL/GenBank/DDBJ databases">
        <authorList>
            <person name="Fleischmann R.D."/>
            <person name="Dodson R.J."/>
            <person name="Haft D.H."/>
            <person name="Merkel J.S."/>
            <person name="Nelson W.C."/>
            <person name="Fraser C.M."/>
        </authorList>
    </citation>
    <scope>NUCLEOTIDE SEQUENCE [LARGE SCALE GENOMIC DNA]</scope>
    <source>
        <strain>ATCC 700084 / mc(2)155</strain>
    </source>
</reference>
<reference evidence="27" key="3">
    <citation type="journal article" date="2007" name="Genome Biol.">
        <title>Interrupted coding sequences in Mycobacterium smegmatis: authentic mutations or sequencing errors?</title>
        <authorList>
            <person name="Deshayes C."/>
            <person name="Perrodou E."/>
            <person name="Gallien S."/>
            <person name="Euphrasie D."/>
            <person name="Schaeffer C."/>
            <person name="Van-Dorsselaer A."/>
            <person name="Poch O."/>
            <person name="Lecompte O."/>
            <person name="Reyrat J.-M."/>
        </authorList>
    </citation>
    <scope>NUCLEOTIDE SEQUENCE [LARGE SCALE GENOMIC DNA]</scope>
    <source>
        <strain>ATCC 700084 / mc(2)155</strain>
    </source>
</reference>
<reference key="4">
    <citation type="journal article" date="2009" name="Genome Res.">
        <title>Ortho-proteogenomics: multiple proteomes investigation through orthology and a new MS-based protocol.</title>
        <authorList>
            <person name="Gallien S."/>
            <person name="Perrodou E."/>
            <person name="Carapito C."/>
            <person name="Deshayes C."/>
            <person name="Reyrat J.-M."/>
            <person name="Van Dorsselaer A."/>
            <person name="Poch O."/>
            <person name="Schaeffer C."/>
            <person name="Lecompte O."/>
        </authorList>
    </citation>
    <scope>NUCLEOTIDE SEQUENCE [LARGE SCALE GENOMIC DNA]</scope>
    <source>
        <strain>ATCC 700084 / mc(2)155</strain>
    </source>
</reference>
<reference key="5">
    <citation type="journal article" date="2001" name="Mol. Microbiol.">
        <title>The cold-shock stress response in Mycobacterium smegmatis induces the expression of a histone-like protein.</title>
        <authorList>
            <person name="Shires K."/>
            <person name="Steyn L."/>
        </authorList>
    </citation>
    <scope>PROTEIN SEQUENCE OF 1-15</scope>
    <scope>INDUCTION</scope>
    <source>
        <strain>ATCC 700084 / mc(2)155</strain>
        <strain>LR222</strain>
    </source>
</reference>
<reference key="6">
    <citation type="journal article" date="2007" name="J. Bacteriol.">
        <title>Control of cell wall assembly by a histone-like protein in Mycobacteria.</title>
        <authorList>
            <person name="Katsube T."/>
            <person name="Matsumoto S."/>
            <person name="Takatsuka M."/>
            <person name="Okuyama M."/>
            <person name="Ozeki Y."/>
            <person name="Naito M."/>
            <person name="Nishiuchi Y."/>
            <person name="Fujiwara N."/>
            <person name="Yoshimura M."/>
            <person name="Tsuboi T."/>
            <person name="Torii M."/>
            <person name="Oshitani N."/>
            <person name="Arakawa T."/>
            <person name="Kobayashi K."/>
        </authorList>
    </citation>
    <scope>SUBCELLULAR LOCATION</scope>
    <scope>DISRUPTION PHENOTYPE</scope>
    <source>
        <strain>ATCC 700084 / mc(2)155</strain>
    </source>
</reference>
<reference key="7">
    <citation type="journal article" date="2008" name="Biochemistry">
        <title>The C-terminal domain of HU-related histone-like protein Hlp from Mycobacterium smegmatis mediates DNA end-joining.</title>
        <authorList>
            <person name="Mukherjee A."/>
            <person name="Bhattacharyya G."/>
            <person name="Grove A."/>
        </authorList>
    </citation>
    <scope>FUNCTION</scope>
    <scope>DOMAIN</scope>
    <scope>DNA-BINDING</scope>
</reference>
<reference key="8">
    <citation type="journal article" date="2011" name="PLoS ONE">
        <title>A histone-like protein of mycobacteria possesses ferritin superfamily protein-like activity and protects against DNA damage by Fenton reaction.</title>
        <authorList>
            <person name="Takatsuka M."/>
            <person name="Osada-Oka M."/>
            <person name="Satoh E.F."/>
            <person name="Kitadokoro K."/>
            <person name="Nishiuchi Y."/>
            <person name="Niki M."/>
            <person name="Inoue M."/>
            <person name="Iwai K."/>
            <person name="Arakawa T."/>
            <person name="Shimoji Y."/>
            <person name="Ogura H."/>
            <person name="Kobayashi K."/>
            <person name="Rambukkana A."/>
            <person name="Matsumoto S."/>
        </authorList>
    </citation>
    <scope>FUNCTION</scope>
    <scope>CATALYTIC ACTIVITY</scope>
    <scope>BIOPHYSICOCHEMICAL PROPERTIES</scope>
    <scope>DISRUPTION PHENOTYPE</scope>
    <source>
        <strain>ATCC 700084 / mc(2)155</strain>
    </source>
</reference>
<reference key="9">
    <citation type="journal article" date="2014" name="Nat. Commun.">
        <title>Targeting Mycobacterium tuberculosis nucleoid-associated protein HU with structure-based inhibitors.</title>
        <authorList>
            <person name="Bhowmick T."/>
            <person name="Ghosh S."/>
            <person name="Dixit K."/>
            <person name="Ganesan V."/>
            <person name="Ramagopal U.A."/>
            <person name="Dey D."/>
            <person name="Sarma S.P."/>
            <person name="Ramakumar S."/>
            <person name="Nagaraja V."/>
        </authorList>
    </citation>
    <scope>FUNCTION</scope>
    <scope>ACTIVITY REGULATION</scope>
    <scope>DNA-BINDING</scope>
    <source>
        <strain>ATCC 700084 / mc(2)155</strain>
    </source>
</reference>
<reference key="10">
    <citation type="journal article" date="2017" name="MBio">
        <title>HupB Is a Bacterial Nucleoid-Associated Protein with an Indispensable Eukaryotic-Like Tail.</title>
        <authorList>
            <person name="Holowka J."/>
            <person name="Trojanowski D."/>
            <person name="Ginda K."/>
            <person name="Wojtas B."/>
            <person name="Gielniewski B."/>
            <person name="Jakimowicz D."/>
            <person name="Zakrzewska-Czerwinska J."/>
        </authorList>
    </citation>
    <scope>FUNCTION</scope>
    <scope>SUBUNIT</scope>
    <scope>SUBCELLULAR LOCATION</scope>
    <scope>PROTEIN ABUNDANCE</scope>
    <scope>DOMAIN</scope>
    <scope>DISRUPTION PHENOTYPE</scope>
    <source>
        <strain>ATCC 700084 / mc(2)155</strain>
    </source>
</reference>
<reference key="11">
    <citation type="journal article" date="2018" name="J. Bacteriol.">
        <title>The Origin of Chromosomal Replication Is Asymmetrically Positioned on the Mycobacterial Nucleoid, and the Timing of Its Firing Depends on HupB.</title>
        <authorList>
            <person name="Holowka J."/>
            <person name="Trojanowski D."/>
            <person name="Janczak M."/>
            <person name="Jakimowicz D."/>
            <person name="Zakrzewska-Czerwinska J."/>
        </authorList>
    </citation>
    <scope>FUNCTION</scope>
    <scope>SUBCELLULAR LOCATION</scope>
    <scope>DISRUPTION PHENOTYPE</scope>
    <source>
        <strain>ATCC 700084 / mc(2)155</strain>
    </source>
</reference>
<reference key="12">
    <citation type="journal article" date="2018" name="Sci. Adv.">
        <title>Posttranslational modification of a histone-like protein regulates phenotypic resistance to isoniazid in mycobacteria.</title>
        <authorList>
            <person name="Sakatos A."/>
            <person name="Babunovic G.H."/>
            <person name="Chase M.R."/>
            <person name="Dills A."/>
            <person name="Leszyk J."/>
            <person name="Rosebrock T."/>
            <person name="Bryson B."/>
            <person name="Fortune S.M."/>
        </authorList>
    </citation>
    <scope>FUNCTION</scope>
    <scope>ACETYLATION AT LYS-3; LYS-72; LYS-94 AND LYS-103</scope>
    <scope>METHYLATION AT LYS-3; LYS-86; LYS-94 AND LYS-103</scope>
    <scope>DISRUPTION PHENOTYPE</scope>
    <scope>MUTAGENESIS OF LYS-3; ARG-55; LYS-72; LYS-86 AND LYS-94</scope>
    <source>
        <strain>ATCC 700084 / mc(2)155</strain>
    </source>
</reference>
<reference key="13">
    <citation type="journal article" date="2022" name="IScience">
        <title>RNase E and HupB dynamics foster mycobacterial cell homeostasis and fitness.</title>
        <authorList>
            <person name="Griego A."/>
            <person name="Douche T."/>
            <person name="Gianetto Q.G."/>
            <person name="Matondo M."/>
            <person name="Manina G."/>
        </authorList>
    </citation>
    <scope>FUNCTION</scope>
    <scope>INTERACTION WITH RNE</scope>
    <scope>SUBCELLULAR LOCATION</scope>
    <source>
        <strain>ATCC 700084 / mc(2)155</strain>
    </source>
</reference>
<reference key="14">
    <citation type="journal article" date="2023" name="Front. Microbiol.">
        <title>Mycobacterial IHF is a highly dynamic nucleoid-associated protein that assists HupB in organizing chromatin.</title>
        <authorList>
            <person name="Holowka J."/>
            <person name="Lebkowski T."/>
            <person name="Feddersen H."/>
            <person name="Giacomelli G."/>
            <person name="Druzka K."/>
            <person name="Makowski L."/>
            <person name="Trojanowski D."/>
            <person name="Broda N."/>
            <person name="Bramkamp M."/>
            <person name="Zakrzewska-Czerwinska J."/>
        </authorList>
    </citation>
    <scope>FUNCTION</scope>
    <scope>SUBCELLULAR LOCATION</scope>
    <scope>INDUCTION</scope>
    <scope>DISRUPTION PHENOTYPE</scope>
</reference>